<proteinExistence type="inferred from homology"/>
<reference key="1">
    <citation type="journal article" date="2002" name="Nature">
        <title>Comparison of the genomes of two Xanthomonas pathogens with differing host specificities.</title>
        <authorList>
            <person name="da Silva A.C.R."/>
            <person name="Ferro J.A."/>
            <person name="Reinach F.C."/>
            <person name="Farah C.S."/>
            <person name="Furlan L.R."/>
            <person name="Quaggio R.B."/>
            <person name="Monteiro-Vitorello C.B."/>
            <person name="Van Sluys M.A."/>
            <person name="Almeida N.F. Jr."/>
            <person name="Alves L.M.C."/>
            <person name="do Amaral A.M."/>
            <person name="Bertolini M.C."/>
            <person name="Camargo L.E.A."/>
            <person name="Camarotte G."/>
            <person name="Cannavan F."/>
            <person name="Cardozo J."/>
            <person name="Chambergo F."/>
            <person name="Ciapina L.P."/>
            <person name="Cicarelli R.M.B."/>
            <person name="Coutinho L.L."/>
            <person name="Cursino-Santos J.R."/>
            <person name="El-Dorry H."/>
            <person name="Faria J.B."/>
            <person name="Ferreira A.J.S."/>
            <person name="Ferreira R.C.C."/>
            <person name="Ferro M.I.T."/>
            <person name="Formighieri E.F."/>
            <person name="Franco M.C."/>
            <person name="Greggio C.C."/>
            <person name="Gruber A."/>
            <person name="Katsuyama A.M."/>
            <person name="Kishi L.T."/>
            <person name="Leite R.P."/>
            <person name="Lemos E.G.M."/>
            <person name="Lemos M.V.F."/>
            <person name="Locali E.C."/>
            <person name="Machado M.A."/>
            <person name="Madeira A.M.B.N."/>
            <person name="Martinez-Rossi N.M."/>
            <person name="Martins E.C."/>
            <person name="Meidanis J."/>
            <person name="Menck C.F.M."/>
            <person name="Miyaki C.Y."/>
            <person name="Moon D.H."/>
            <person name="Moreira L.M."/>
            <person name="Novo M.T.M."/>
            <person name="Okura V.K."/>
            <person name="Oliveira M.C."/>
            <person name="Oliveira V.R."/>
            <person name="Pereira H.A."/>
            <person name="Rossi A."/>
            <person name="Sena J.A.D."/>
            <person name="Silva C."/>
            <person name="de Souza R.F."/>
            <person name="Spinola L.A.F."/>
            <person name="Takita M.A."/>
            <person name="Tamura R.E."/>
            <person name="Teixeira E.C."/>
            <person name="Tezza R.I.D."/>
            <person name="Trindade dos Santos M."/>
            <person name="Truffi D."/>
            <person name="Tsai S.M."/>
            <person name="White F.F."/>
            <person name="Setubal J.C."/>
            <person name="Kitajima J.P."/>
        </authorList>
    </citation>
    <scope>NUCLEOTIDE SEQUENCE [LARGE SCALE GENOMIC DNA]</scope>
    <source>
        <strain>306</strain>
    </source>
</reference>
<organism>
    <name type="scientific">Xanthomonas axonopodis pv. citri (strain 306)</name>
    <dbReference type="NCBI Taxonomy" id="190486"/>
    <lineage>
        <taxon>Bacteria</taxon>
        <taxon>Pseudomonadati</taxon>
        <taxon>Pseudomonadota</taxon>
        <taxon>Gammaproteobacteria</taxon>
        <taxon>Lysobacterales</taxon>
        <taxon>Lysobacteraceae</taxon>
        <taxon>Xanthomonas</taxon>
    </lineage>
</organism>
<accession>Q8PMJ8</accession>
<keyword id="KW-0378">Hydrolase</keyword>
<keyword id="KW-0460">Magnesium</keyword>
<keyword id="KW-0511">Multifunctional enzyme</keyword>
<keyword id="KW-0548">Nucleotidyltransferase</keyword>
<keyword id="KW-0677">Repeat</keyword>
<keyword id="KW-0808">Transferase</keyword>
<gene>
    <name evidence="1" type="primary">glnD</name>
    <name type="ordered locus">XAC1429</name>
</gene>
<sequence length="869" mass="97370">MTDTPAERPDPGVAGDADWAAQARPLLVHVDMRLCKRFDQGEPIERLVALRARAVDQLMRNAWMRCIPADSGLSLHAVGGYGRGELFPRSDVDVLVLGDTAAQQQHEQALARLFALLWDVGLPISHAVRSPAQCTAAAADQTVLTALIESRALVADAQARAALATAIAPPQVWPPRDFFQAKREELLARHQRFGDTADNLEPDIKDGPGGLRDLQTLGWMALRAFGVKDLEALVGLGHVGFDEAAALRREREELARLRFGLHIVANRPEERLRFDYQKTLAERLGFADDPESLGVEKMMQRFYRSAALIRRISDRLLQRFEEQFDGEATPEPLGGGFSLRRGYLAADTESWPDGDVLQVFALFAQWAAHREVRGLHSLTARALAEVLRDLPAYEVADATARERFMALLRGPRAVETLNRMARLGVLGQWIPAFASVSGRMQFDLFHVYTVDQHTLMVLRNIALFAAGRADEHFSIAHEVWPRLRKPELLLLAGLFHDIAKGRGGDHSELGAVDARAFCLAHRLSEGDTELVTWLVEQHLRMSVTAQKQDISDPEVIHRFATLVGTRERLDYLYLLTCADIAGTSPKLWNAWKDRLLADLYFAARRALREGLEHPPPREERLREARESARTLMQAQGHDDVTIDRQFAGMPDENFLRFRPEQLAWQAASLIEVEIGQTLVKARRAVPDNDALEVFVYSPDRDGLFAAIVATLDRKGYGIHRARVLDAPHDAIFDVFEVLPQETYADGDPQRLAATLRQVLAGDLQKVRPARRAVPRQLRHFRFAPRVEFSESAGGRRTRISLVAPDRPGLLADVAHVLRMQHLRVHDARIATFGERAEDQFQITDEHDRPLSESARQALRDALCACLDPV</sequence>
<evidence type="ECO:0000255" key="1">
    <source>
        <dbReference type="HAMAP-Rule" id="MF_00277"/>
    </source>
</evidence>
<evidence type="ECO:0000255" key="2">
    <source>
        <dbReference type="PROSITE-ProRule" id="PRU01175"/>
    </source>
</evidence>
<dbReference type="EC" id="2.7.7.59" evidence="1"/>
<dbReference type="EC" id="3.1.4.-" evidence="1"/>
<dbReference type="EMBL" id="AE008923">
    <property type="protein sequence ID" value="AAM36300.1"/>
    <property type="molecule type" value="Genomic_DNA"/>
</dbReference>
<dbReference type="SMR" id="Q8PMJ8"/>
<dbReference type="KEGG" id="xac:XAC1429"/>
<dbReference type="eggNOG" id="COG2844">
    <property type="taxonomic scope" value="Bacteria"/>
</dbReference>
<dbReference type="HOGENOM" id="CLU_012833_0_0_6"/>
<dbReference type="Proteomes" id="UP000000576">
    <property type="component" value="Chromosome"/>
</dbReference>
<dbReference type="GO" id="GO:0008773">
    <property type="term" value="F:[protein-PII] uridylyltransferase activity"/>
    <property type="evidence" value="ECO:0007669"/>
    <property type="project" value="UniProtKB-UniRule"/>
</dbReference>
<dbReference type="GO" id="GO:0008081">
    <property type="term" value="F:phosphoric diester hydrolase activity"/>
    <property type="evidence" value="ECO:0007669"/>
    <property type="project" value="UniProtKB-UniRule"/>
</dbReference>
<dbReference type="GO" id="GO:0006808">
    <property type="term" value="P:regulation of nitrogen utilization"/>
    <property type="evidence" value="ECO:0007669"/>
    <property type="project" value="UniProtKB-UniRule"/>
</dbReference>
<dbReference type="CDD" id="cd04899">
    <property type="entry name" value="ACT_ACR-UUR-like_2"/>
    <property type="match status" value="1"/>
</dbReference>
<dbReference type="CDD" id="cd04900">
    <property type="entry name" value="ACT_UUR-like_1"/>
    <property type="match status" value="1"/>
</dbReference>
<dbReference type="CDD" id="cd00077">
    <property type="entry name" value="HDc"/>
    <property type="match status" value="1"/>
</dbReference>
<dbReference type="CDD" id="cd05401">
    <property type="entry name" value="NT_GlnE_GlnD_like"/>
    <property type="match status" value="1"/>
</dbReference>
<dbReference type="Gene3D" id="3.30.70.260">
    <property type="match status" value="1"/>
</dbReference>
<dbReference type="Gene3D" id="1.10.3090.10">
    <property type="entry name" value="cca-adding enzyme, domain 2"/>
    <property type="match status" value="1"/>
</dbReference>
<dbReference type="HAMAP" id="MF_00277">
    <property type="entry name" value="PII_uridylyl_transf"/>
    <property type="match status" value="1"/>
</dbReference>
<dbReference type="InterPro" id="IPR045865">
    <property type="entry name" value="ACT-like_dom_sf"/>
</dbReference>
<dbReference type="InterPro" id="IPR002912">
    <property type="entry name" value="ACT_dom"/>
</dbReference>
<dbReference type="InterPro" id="IPR003607">
    <property type="entry name" value="HD/PDEase_dom"/>
</dbReference>
<dbReference type="InterPro" id="IPR006674">
    <property type="entry name" value="HD_domain"/>
</dbReference>
<dbReference type="InterPro" id="IPR043519">
    <property type="entry name" value="NT_sf"/>
</dbReference>
<dbReference type="InterPro" id="IPR013546">
    <property type="entry name" value="PII_UdlTrfase/GS_AdlTrfase"/>
</dbReference>
<dbReference type="InterPro" id="IPR002934">
    <property type="entry name" value="Polymerase_NTP_transf_dom"/>
</dbReference>
<dbReference type="InterPro" id="IPR010043">
    <property type="entry name" value="UTase/UR"/>
</dbReference>
<dbReference type="NCBIfam" id="NF003347">
    <property type="entry name" value="PRK04374.1"/>
    <property type="match status" value="1"/>
</dbReference>
<dbReference type="NCBIfam" id="TIGR01693">
    <property type="entry name" value="UTase_glnD"/>
    <property type="match status" value="1"/>
</dbReference>
<dbReference type="PANTHER" id="PTHR47320">
    <property type="entry name" value="BIFUNCTIONAL URIDYLYLTRANSFERASE/URIDYLYL-REMOVING ENZYME"/>
    <property type="match status" value="1"/>
</dbReference>
<dbReference type="PANTHER" id="PTHR47320:SF1">
    <property type="entry name" value="BIFUNCTIONAL URIDYLYLTRANSFERASE_URIDYLYL-REMOVING ENZYME"/>
    <property type="match status" value="1"/>
</dbReference>
<dbReference type="Pfam" id="PF08335">
    <property type="entry name" value="GlnD_UR_UTase"/>
    <property type="match status" value="1"/>
</dbReference>
<dbReference type="Pfam" id="PF01966">
    <property type="entry name" value="HD"/>
    <property type="match status" value="1"/>
</dbReference>
<dbReference type="Pfam" id="PF01909">
    <property type="entry name" value="NTP_transf_2"/>
    <property type="match status" value="1"/>
</dbReference>
<dbReference type="PIRSF" id="PIRSF006288">
    <property type="entry name" value="PII_uridyltransf"/>
    <property type="match status" value="1"/>
</dbReference>
<dbReference type="SMART" id="SM00471">
    <property type="entry name" value="HDc"/>
    <property type="match status" value="1"/>
</dbReference>
<dbReference type="SUPFAM" id="SSF55021">
    <property type="entry name" value="ACT-like"/>
    <property type="match status" value="2"/>
</dbReference>
<dbReference type="SUPFAM" id="SSF109604">
    <property type="entry name" value="HD-domain/PDEase-like"/>
    <property type="match status" value="1"/>
</dbReference>
<dbReference type="SUPFAM" id="SSF81301">
    <property type="entry name" value="Nucleotidyltransferase"/>
    <property type="match status" value="1"/>
</dbReference>
<dbReference type="SUPFAM" id="SSF81593">
    <property type="entry name" value="Nucleotidyltransferase substrate binding subunit/domain"/>
    <property type="match status" value="1"/>
</dbReference>
<dbReference type="PROSITE" id="PS51671">
    <property type="entry name" value="ACT"/>
    <property type="match status" value="2"/>
</dbReference>
<dbReference type="PROSITE" id="PS51831">
    <property type="entry name" value="HD"/>
    <property type="match status" value="1"/>
</dbReference>
<feature type="chain" id="PRO_0000192776" description="Bifunctional uridylyltransferase/uridylyl-removing enzyme">
    <location>
        <begin position="1"/>
        <end position="869"/>
    </location>
</feature>
<feature type="domain" description="HD" evidence="2">
    <location>
        <begin position="450"/>
        <end position="572"/>
    </location>
</feature>
<feature type="domain" description="ACT 1" evidence="1">
    <location>
        <begin position="692"/>
        <end position="774"/>
    </location>
</feature>
<feature type="domain" description="ACT 2" evidence="1">
    <location>
        <begin position="798"/>
        <end position="869"/>
    </location>
</feature>
<feature type="region of interest" description="Uridylyltransferase">
    <location>
        <begin position="1"/>
        <end position="332"/>
    </location>
</feature>
<feature type="region of interest" description="Uridylyl-removing">
    <location>
        <begin position="333"/>
        <end position="691"/>
    </location>
</feature>
<name>GLND_XANAC</name>
<comment type="function">
    <text evidence="1">Modifies, by uridylylation and deuridylylation, the PII regulatory proteins (GlnB and homologs), in response to the nitrogen status of the cell that GlnD senses through the glutamine level. Under low glutamine levels, catalyzes the conversion of the PII proteins and UTP to PII-UMP and PPi, while under higher glutamine levels, GlnD hydrolyzes PII-UMP to PII and UMP (deuridylylation). Thus, controls uridylylation state and activity of the PII proteins, and plays an important role in the regulation of nitrogen assimilation and metabolism.</text>
</comment>
<comment type="catalytic activity">
    <reaction evidence="1">
        <text>[protein-PII]-L-tyrosine + UTP = [protein-PII]-uridylyl-L-tyrosine + diphosphate</text>
        <dbReference type="Rhea" id="RHEA:13673"/>
        <dbReference type="Rhea" id="RHEA-COMP:12147"/>
        <dbReference type="Rhea" id="RHEA-COMP:12148"/>
        <dbReference type="ChEBI" id="CHEBI:33019"/>
        <dbReference type="ChEBI" id="CHEBI:46398"/>
        <dbReference type="ChEBI" id="CHEBI:46858"/>
        <dbReference type="ChEBI" id="CHEBI:90602"/>
        <dbReference type="EC" id="2.7.7.59"/>
    </reaction>
</comment>
<comment type="catalytic activity">
    <reaction evidence="1">
        <text>[protein-PII]-uridylyl-L-tyrosine + H2O = [protein-PII]-L-tyrosine + UMP + H(+)</text>
        <dbReference type="Rhea" id="RHEA:48600"/>
        <dbReference type="Rhea" id="RHEA-COMP:12147"/>
        <dbReference type="Rhea" id="RHEA-COMP:12148"/>
        <dbReference type="ChEBI" id="CHEBI:15377"/>
        <dbReference type="ChEBI" id="CHEBI:15378"/>
        <dbReference type="ChEBI" id="CHEBI:46858"/>
        <dbReference type="ChEBI" id="CHEBI:57865"/>
        <dbReference type="ChEBI" id="CHEBI:90602"/>
    </reaction>
</comment>
<comment type="cofactor">
    <cofactor evidence="1">
        <name>Mg(2+)</name>
        <dbReference type="ChEBI" id="CHEBI:18420"/>
    </cofactor>
</comment>
<comment type="activity regulation">
    <text evidence="1">Uridylyltransferase (UTase) activity is inhibited by glutamine, while glutamine activates uridylyl-removing (UR) activity.</text>
</comment>
<comment type="domain">
    <text evidence="1">Has four distinct domains: an N-terminal nucleotidyltransferase (NT) domain responsible for UTase activity, a central HD domain that encodes UR activity, and two C-terminal ACT domains that seem to have a role in glutamine sensing.</text>
</comment>
<comment type="similarity">
    <text evidence="1">Belongs to the GlnD family.</text>
</comment>
<protein>
    <recommendedName>
        <fullName evidence="1">Bifunctional uridylyltransferase/uridylyl-removing enzyme</fullName>
        <shortName evidence="1">UTase/UR</shortName>
    </recommendedName>
    <alternativeName>
        <fullName evidence="1">Bifunctional [protein-PII] modification enzyme</fullName>
    </alternativeName>
    <alternativeName>
        <fullName evidence="1">Bifunctional nitrogen sensor protein</fullName>
    </alternativeName>
    <domain>
        <recommendedName>
            <fullName evidence="1">[Protein-PII] uridylyltransferase</fullName>
            <shortName evidence="1">PII uridylyltransferase</shortName>
            <shortName evidence="1">UTase</shortName>
            <ecNumber evidence="1">2.7.7.59</ecNumber>
        </recommendedName>
    </domain>
    <domain>
        <recommendedName>
            <fullName evidence="1">[Protein-PII]-UMP uridylyl-removing enzyme</fullName>
            <shortName evidence="1">UR</shortName>
            <ecNumber evidence="1">3.1.4.-</ecNumber>
        </recommendedName>
    </domain>
</protein>